<gene>
    <name evidence="1" type="primary">guaB</name>
    <name type="ordered locus">M6_Spy1875</name>
</gene>
<comment type="function">
    <text evidence="1">Catalyzes the conversion of inosine 5'-phosphate (IMP) to xanthosine 5'-phosphate (XMP), the first committed and rate-limiting step in the de novo synthesis of guanine nucleotides, and therefore plays an important role in the regulation of cell growth.</text>
</comment>
<comment type="catalytic activity">
    <reaction evidence="1">
        <text>IMP + NAD(+) + H2O = XMP + NADH + H(+)</text>
        <dbReference type="Rhea" id="RHEA:11708"/>
        <dbReference type="ChEBI" id="CHEBI:15377"/>
        <dbReference type="ChEBI" id="CHEBI:15378"/>
        <dbReference type="ChEBI" id="CHEBI:57464"/>
        <dbReference type="ChEBI" id="CHEBI:57540"/>
        <dbReference type="ChEBI" id="CHEBI:57945"/>
        <dbReference type="ChEBI" id="CHEBI:58053"/>
        <dbReference type="EC" id="1.1.1.205"/>
    </reaction>
</comment>
<comment type="cofactor">
    <cofactor evidence="1">
        <name>K(+)</name>
        <dbReference type="ChEBI" id="CHEBI:29103"/>
    </cofactor>
</comment>
<comment type="activity regulation">
    <text evidence="1">Mycophenolic acid (MPA) is a non-competitive inhibitor that prevents formation of the closed enzyme conformation by binding to the same site as the amobile flap. In contrast, mizoribine monophosphate (MZP) is a competitive inhibitor that induces the closed conformation. MPA is a potent inhibitor of mammalian IMPDHs but a poor inhibitor of the bacterial enzymes. MZP is a more potent inhibitor of bacterial IMPDH.</text>
</comment>
<comment type="pathway">
    <text evidence="1">Purine metabolism; XMP biosynthesis via de novo pathway; XMP from IMP: step 1/1.</text>
</comment>
<comment type="subunit">
    <text evidence="1">Homotetramer.</text>
</comment>
<comment type="similarity">
    <text evidence="1">Belongs to the IMPDH/GMPR family.</text>
</comment>
<sequence length="493" mass="52807">MSNWDTKFLKKGYTFDDVLLIPAESHVLPNEVDLKTKLADNLTLNIPIITAAMDTVTGSKMAIAIARAGGLGVIHKNMSITEQAEEVRKVKRSENGVIIDPFFLTPEHKVSEAEELMQRYRISGVPIVETLANRKLVGIITNRDMRFISDYNAPISEHMTSEHLVTAAVGTDLETAERILHEHRIEKLPLVDNSGRLSGLITIKDIEKVIEFPHAAKDEFGRLLVAAAVGVTSDTFERAEALFEAGADAIVIDTAHGHSAGVLRKIAEIRAHFPNRTLIAGNIATAEGARALYDAGVDVVKVGIGPGSICTTRVVAGVGVPQVTAIYDAAAVAREYGKTIIADGGIKYSGDIVKALAAGGNAVMLGSMFAGTDEAPGETEIYQGRKFKTYRGMGSIAAMKKGSSDRYFQGSVNEANKLVPEGIEGRVAYKGAASDIVFQMLGGIRSGMGYVGAGDIQELHENAQFVEMSGAGLIESHPHDVQITNEAPNYSVH</sequence>
<evidence type="ECO:0000255" key="1">
    <source>
        <dbReference type="HAMAP-Rule" id="MF_01964"/>
    </source>
</evidence>
<evidence type="ECO:0000269" key="2">
    <source ref="2"/>
</evidence>
<dbReference type="EC" id="1.1.1.205" evidence="1"/>
<dbReference type="EMBL" id="CP000003">
    <property type="protein sequence ID" value="AAT88010.1"/>
    <property type="molecule type" value="Genomic_DNA"/>
</dbReference>
<dbReference type="RefSeq" id="WP_002991454.1">
    <property type="nucleotide sequence ID" value="NC_006086.1"/>
</dbReference>
<dbReference type="SMR" id="Q5X9A3"/>
<dbReference type="GeneID" id="69901624"/>
<dbReference type="KEGG" id="spa:M6_Spy1875"/>
<dbReference type="HOGENOM" id="CLU_022552_1_0_9"/>
<dbReference type="UniPathway" id="UPA00601">
    <property type="reaction ID" value="UER00295"/>
</dbReference>
<dbReference type="Proteomes" id="UP000001167">
    <property type="component" value="Chromosome"/>
</dbReference>
<dbReference type="GO" id="GO:0003938">
    <property type="term" value="F:IMP dehydrogenase activity"/>
    <property type="evidence" value="ECO:0007669"/>
    <property type="project" value="UniProtKB-UniRule"/>
</dbReference>
<dbReference type="GO" id="GO:0046872">
    <property type="term" value="F:metal ion binding"/>
    <property type="evidence" value="ECO:0007669"/>
    <property type="project" value="UniProtKB-UniRule"/>
</dbReference>
<dbReference type="GO" id="GO:0000166">
    <property type="term" value="F:nucleotide binding"/>
    <property type="evidence" value="ECO:0007669"/>
    <property type="project" value="UniProtKB-UniRule"/>
</dbReference>
<dbReference type="GO" id="GO:0006177">
    <property type="term" value="P:GMP biosynthetic process"/>
    <property type="evidence" value="ECO:0007669"/>
    <property type="project" value="UniProtKB-UniRule"/>
</dbReference>
<dbReference type="GO" id="GO:0006183">
    <property type="term" value="P:GTP biosynthetic process"/>
    <property type="evidence" value="ECO:0007669"/>
    <property type="project" value="TreeGrafter"/>
</dbReference>
<dbReference type="CDD" id="cd04601">
    <property type="entry name" value="CBS_pair_IMPDH"/>
    <property type="match status" value="1"/>
</dbReference>
<dbReference type="CDD" id="cd00381">
    <property type="entry name" value="IMPDH"/>
    <property type="match status" value="1"/>
</dbReference>
<dbReference type="FunFam" id="3.20.20.70:FF:000003">
    <property type="entry name" value="GMP reductase"/>
    <property type="match status" value="1"/>
</dbReference>
<dbReference type="Gene3D" id="3.20.20.70">
    <property type="entry name" value="Aldolase class I"/>
    <property type="match status" value="1"/>
</dbReference>
<dbReference type="HAMAP" id="MF_01964">
    <property type="entry name" value="IMPDH"/>
    <property type="match status" value="1"/>
</dbReference>
<dbReference type="InterPro" id="IPR013785">
    <property type="entry name" value="Aldolase_TIM"/>
</dbReference>
<dbReference type="InterPro" id="IPR000644">
    <property type="entry name" value="CBS_dom"/>
</dbReference>
<dbReference type="InterPro" id="IPR046342">
    <property type="entry name" value="CBS_dom_sf"/>
</dbReference>
<dbReference type="InterPro" id="IPR005990">
    <property type="entry name" value="IMP_DH"/>
</dbReference>
<dbReference type="InterPro" id="IPR015875">
    <property type="entry name" value="IMP_DH/GMP_Rdtase_CS"/>
</dbReference>
<dbReference type="InterPro" id="IPR001093">
    <property type="entry name" value="IMP_DH_GMPRt"/>
</dbReference>
<dbReference type="NCBIfam" id="TIGR01302">
    <property type="entry name" value="IMP_dehydrog"/>
    <property type="match status" value="1"/>
</dbReference>
<dbReference type="PANTHER" id="PTHR11911:SF111">
    <property type="entry name" value="INOSINE-5'-MONOPHOSPHATE DEHYDROGENASE"/>
    <property type="match status" value="1"/>
</dbReference>
<dbReference type="PANTHER" id="PTHR11911">
    <property type="entry name" value="INOSINE-5-MONOPHOSPHATE DEHYDROGENASE RELATED"/>
    <property type="match status" value="1"/>
</dbReference>
<dbReference type="Pfam" id="PF00571">
    <property type="entry name" value="CBS"/>
    <property type="match status" value="2"/>
</dbReference>
<dbReference type="Pfam" id="PF00478">
    <property type="entry name" value="IMPDH"/>
    <property type="match status" value="1"/>
</dbReference>
<dbReference type="PIRSF" id="PIRSF000130">
    <property type="entry name" value="IMPDH"/>
    <property type="match status" value="1"/>
</dbReference>
<dbReference type="SMART" id="SM00116">
    <property type="entry name" value="CBS"/>
    <property type="match status" value="2"/>
</dbReference>
<dbReference type="SMART" id="SM01240">
    <property type="entry name" value="IMPDH"/>
    <property type="match status" value="1"/>
</dbReference>
<dbReference type="SUPFAM" id="SSF54631">
    <property type="entry name" value="CBS-domain pair"/>
    <property type="match status" value="1"/>
</dbReference>
<dbReference type="SUPFAM" id="SSF51412">
    <property type="entry name" value="Inosine monophosphate dehydrogenase (IMPDH)"/>
    <property type="match status" value="1"/>
</dbReference>
<dbReference type="PROSITE" id="PS51371">
    <property type="entry name" value="CBS"/>
    <property type="match status" value="2"/>
</dbReference>
<dbReference type="PROSITE" id="PS00487">
    <property type="entry name" value="IMP_DH_GMP_RED"/>
    <property type="match status" value="1"/>
</dbReference>
<proteinExistence type="evidence at protein level"/>
<protein>
    <recommendedName>
        <fullName evidence="1">Inosine-5'-monophosphate dehydrogenase</fullName>
        <shortName evidence="1">IMP dehydrogenase</shortName>
        <shortName evidence="1">IMPD</shortName>
        <shortName evidence="1">IMPDH</shortName>
        <ecNumber evidence="1">1.1.1.205</ecNumber>
    </recommendedName>
</protein>
<reference key="1">
    <citation type="journal article" date="2004" name="J. Infect. Dis.">
        <title>Progress toward characterization of the group A Streptococcus metagenome: complete genome sequence of a macrolide-resistant serotype M6 strain.</title>
        <authorList>
            <person name="Banks D.J."/>
            <person name="Porcella S.F."/>
            <person name="Barbian K.D."/>
            <person name="Beres S.B."/>
            <person name="Philips L.E."/>
            <person name="Voyich J.M."/>
            <person name="DeLeo F.R."/>
            <person name="Martin J.M."/>
            <person name="Somerville G.A."/>
            <person name="Musser J.M."/>
        </authorList>
    </citation>
    <scope>NUCLEOTIDE SEQUENCE [LARGE SCALE GENOMIC DNA]</scope>
    <source>
        <strain>ATCC BAA-946 / MGAS10394</strain>
    </source>
</reference>
<reference key="2">
    <citation type="submission" date="2000-05" db="UniProtKB">
        <title>Two-dimensional gel electrophoresis map of Streptococcus pyogenes proteins.</title>
        <authorList>
            <person name="Hogan D.A."/>
            <person name="Du P."/>
            <person name="Stevenson T.I."/>
            <person name="Whitton M."/>
            <person name="Kilby G.W."/>
            <person name="Rogers J."/>
            <person name="VanBogelen R.A."/>
        </authorList>
    </citation>
    <scope>PROTEIN SEQUENCE OF 2-35; 77-89; 110-119; 122-143; 185-264; 277-301; 407-426 AND 431-445</scope>
    <source>
        <strain>JRS4 / Serotype M6</strain>
    </source>
</reference>
<accession>Q5X9A3</accession>
<name>IMDH_STRP6</name>
<feature type="initiator methionine" description="Removed" evidence="2">
    <location>
        <position position="1"/>
    </location>
</feature>
<feature type="chain" id="PRO_0000093717" description="Inosine-5'-monophosphate dehydrogenase">
    <location>
        <begin position="2"/>
        <end position="493"/>
    </location>
</feature>
<feature type="domain" description="CBS 1" evidence="1">
    <location>
        <begin position="97"/>
        <end position="155"/>
    </location>
</feature>
<feature type="domain" description="CBS 2" evidence="1">
    <location>
        <begin position="159"/>
        <end position="219"/>
    </location>
</feature>
<feature type="active site" description="Thioimidate intermediate" evidence="1">
    <location>
        <position position="310"/>
    </location>
</feature>
<feature type="active site" description="Proton acceptor" evidence="1">
    <location>
        <position position="406"/>
    </location>
</feature>
<feature type="binding site" evidence="1">
    <location>
        <position position="253"/>
    </location>
    <ligand>
        <name>NAD(+)</name>
        <dbReference type="ChEBI" id="CHEBI:57540"/>
    </ligand>
</feature>
<feature type="binding site" evidence="1">
    <location>
        <begin position="303"/>
        <end position="305"/>
    </location>
    <ligand>
        <name>NAD(+)</name>
        <dbReference type="ChEBI" id="CHEBI:57540"/>
    </ligand>
</feature>
<feature type="binding site" description="in other chain" evidence="1">
    <location>
        <position position="305"/>
    </location>
    <ligand>
        <name>K(+)</name>
        <dbReference type="ChEBI" id="CHEBI:29103"/>
        <note>ligand shared between two tetrameric partners</note>
    </ligand>
</feature>
<feature type="binding site" description="in other chain" evidence="1">
    <location>
        <position position="307"/>
    </location>
    <ligand>
        <name>K(+)</name>
        <dbReference type="ChEBI" id="CHEBI:29103"/>
        <note>ligand shared between two tetrameric partners</note>
    </ligand>
</feature>
<feature type="binding site" evidence="1">
    <location>
        <position position="308"/>
    </location>
    <ligand>
        <name>IMP</name>
        <dbReference type="ChEBI" id="CHEBI:58053"/>
    </ligand>
</feature>
<feature type="binding site" description="in other chain" evidence="1">
    <location>
        <position position="310"/>
    </location>
    <ligand>
        <name>K(+)</name>
        <dbReference type="ChEBI" id="CHEBI:29103"/>
        <note>ligand shared between two tetrameric partners</note>
    </ligand>
</feature>
<feature type="binding site" evidence="1">
    <location>
        <begin position="343"/>
        <end position="345"/>
    </location>
    <ligand>
        <name>IMP</name>
        <dbReference type="ChEBI" id="CHEBI:58053"/>
    </ligand>
</feature>
<feature type="binding site" evidence="1">
    <location>
        <begin position="366"/>
        <end position="367"/>
    </location>
    <ligand>
        <name>IMP</name>
        <dbReference type="ChEBI" id="CHEBI:58053"/>
    </ligand>
</feature>
<feature type="binding site" evidence="1">
    <location>
        <begin position="390"/>
        <end position="394"/>
    </location>
    <ligand>
        <name>IMP</name>
        <dbReference type="ChEBI" id="CHEBI:58053"/>
    </ligand>
</feature>
<feature type="binding site" evidence="1">
    <location>
        <position position="421"/>
    </location>
    <ligand>
        <name>IMP</name>
        <dbReference type="ChEBI" id="CHEBI:58053"/>
    </ligand>
</feature>
<feature type="binding site" evidence="1">
    <location>
        <position position="475"/>
    </location>
    <ligand>
        <name>K(+)</name>
        <dbReference type="ChEBI" id="CHEBI:29103"/>
        <note>ligand shared between two tetrameric partners</note>
    </ligand>
</feature>
<feature type="binding site" evidence="1">
    <location>
        <position position="476"/>
    </location>
    <ligand>
        <name>K(+)</name>
        <dbReference type="ChEBI" id="CHEBI:29103"/>
        <note>ligand shared between two tetrameric partners</note>
    </ligand>
</feature>
<feature type="binding site" evidence="1">
    <location>
        <position position="477"/>
    </location>
    <ligand>
        <name>K(+)</name>
        <dbReference type="ChEBI" id="CHEBI:29103"/>
        <note>ligand shared between two tetrameric partners</note>
    </ligand>
</feature>
<organism>
    <name type="scientific">Streptococcus pyogenes serotype M6 (strain ATCC BAA-946 / MGAS10394)</name>
    <dbReference type="NCBI Taxonomy" id="286636"/>
    <lineage>
        <taxon>Bacteria</taxon>
        <taxon>Bacillati</taxon>
        <taxon>Bacillota</taxon>
        <taxon>Bacilli</taxon>
        <taxon>Lactobacillales</taxon>
        <taxon>Streptococcaceae</taxon>
        <taxon>Streptococcus</taxon>
    </lineage>
</organism>
<keyword id="KW-0129">CBS domain</keyword>
<keyword id="KW-0903">Direct protein sequencing</keyword>
<keyword id="KW-0332">GMP biosynthesis</keyword>
<keyword id="KW-0479">Metal-binding</keyword>
<keyword id="KW-0520">NAD</keyword>
<keyword id="KW-0560">Oxidoreductase</keyword>
<keyword id="KW-0630">Potassium</keyword>
<keyword id="KW-0658">Purine biosynthesis</keyword>
<keyword id="KW-0677">Repeat</keyword>